<comment type="function">
    <text>Kinesin is a microtubule-associated force-producing protein that may play a role in organelle transport. Its motor activity is directed toward the microtubule's plus end. The speed of this motor is 4-5 times faster than its animal counterparts.</text>
</comment>
<comment type="subcellular location">
    <subcellularLocation>
        <location evidence="4">Cytoplasm</location>
        <location evidence="4">Cytoskeleton</location>
    </subcellularLocation>
</comment>
<comment type="domain">
    <text>Composed of three structural domains: a large globular N-terminal domain which is responsible for the motor activity of kinesin (it hydrolyzes ATP and binds microtubule), a central alpha-helical coiled coil domain that mediates the heavy chain dimerization; and a small globular C-terminal domain which interacts with other proteins (such as the kinesin light chains), vesicles and membranous organelles.</text>
</comment>
<comment type="similarity">
    <text evidence="2">Belongs to the TRAFAC class myosin-kinesin ATPase superfamily. Kinesin family. Kinesin subfamily.</text>
</comment>
<proteinExistence type="evidence at transcript level"/>
<evidence type="ECO:0000255" key="1"/>
<evidence type="ECO:0000255" key="2">
    <source>
        <dbReference type="PROSITE-ProRule" id="PRU00283"/>
    </source>
</evidence>
<evidence type="ECO:0000256" key="3">
    <source>
        <dbReference type="SAM" id="MobiDB-lite"/>
    </source>
</evidence>
<evidence type="ECO:0000305" key="4"/>
<feature type="chain" id="PRO_0000125363" description="Kinesin heavy chain">
    <location>
        <begin position="1"/>
        <end position="935"/>
    </location>
</feature>
<feature type="domain" description="Kinesin motor" evidence="2">
    <location>
        <begin position="5"/>
        <end position="329"/>
    </location>
</feature>
<feature type="region of interest" description="Disordered" evidence="3">
    <location>
        <begin position="400"/>
        <end position="419"/>
    </location>
</feature>
<feature type="region of interest" description="Disordered" evidence="3">
    <location>
        <begin position="898"/>
        <end position="935"/>
    </location>
</feature>
<feature type="coiled-coil region" evidence="1">
    <location>
        <begin position="342"/>
        <end position="887"/>
    </location>
</feature>
<feature type="binding site" evidence="2">
    <location>
        <begin position="87"/>
        <end position="94"/>
    </location>
    <ligand>
        <name>ATP</name>
        <dbReference type="ChEBI" id="CHEBI:30616"/>
    </ligand>
</feature>
<feature type="binding site" evidence="2">
    <location>
        <begin position="237"/>
        <end position="244"/>
    </location>
    <ligand>
        <name>ATP</name>
        <dbReference type="ChEBI" id="CHEBI:30616"/>
    </ligand>
</feature>
<accession>O43093</accession>
<name>KINH_SYNRA</name>
<sequence>MSGNNIKVVCRFRPQNSLEIREGGTPIIDIDPEGTQLELKGKEFKGNFNFDKVFGMNTAQKDVFDYSIKTIVDDVTAGYNGTVFAYGQTGSGKTFTMMGADIDDEKTKGIIPRIVEQIFDSIMASPSNLEFTVKVSYMEIYMEKVRDLLNPSSENLPIHEDKTKGVYVKGLLEVYVGSTDEVYEVMRRGSNNRVVAYTNMNAESSRSHSIVMFTITQKNVDTGAAKSGKLYLVDLAGSEKVGKTGASGQTLEEAKKINKSLTALGMVINALTDGKSSHVPYRDSKLTRILQESLGGNSRTTLIINCSPSSYNEAETLSTLRFGARAKSIKNKAKVNADLSPAELKALLKKVKSEAVTYQTYIAALEGEVNVWRTGGTVPEGKWVTMDKVSKGDFAGLPPAPGFKSPVSDEGSRPATPVPTLEKDEREEFIKRENELMDQISEKETELTNREKLLESLREEMGYYKEQEQSVTKENQQMTSELSELRLQLQKVSYESKENAITVDSLKEANQDLMAELEELKKNLSEMRQAHKDATDSDKEKRKAEKMAQMMSGFDPSGILNDKERQIRNALSKLDGEQQQTLTVEDLVSLRRELAESKMLVEQHTKTISDLSADKDAMEAKKIELEGRLGALEKEYEELLDKTIAEEEANMQNADVDNLSALKTKLEAQYAEKKEVQQKEIDDLKRELDRKQSGHEKLSAAMTDLRAANDQLQAALSEQPFQAPQDNSDMTEKEKDIERTRKSMAQQLADFEVMKKALMRDLQNRCEKVVELEMSLDETREQYNNVLRASNNKAQQKKMAFLERNLEQLTNVQKQLVEQNASLKKEVALAERKLIARNERIQSLETLLHNAQDKLLNQNKKFEQQLATVRERLEQARSQKSQNSLAALNFSRIAKPLRGNGAAIDNGSDDGSLPTSPTDKRDKRSSWMPGFMNSR</sequence>
<keyword id="KW-0067">ATP-binding</keyword>
<keyword id="KW-0175">Coiled coil</keyword>
<keyword id="KW-0963">Cytoplasm</keyword>
<keyword id="KW-0206">Cytoskeleton</keyword>
<keyword id="KW-0493">Microtubule</keyword>
<keyword id="KW-0505">Motor protein</keyword>
<keyword id="KW-0547">Nucleotide-binding</keyword>
<reference key="1">
    <citation type="journal article" date="1998" name="FEBS Lett.">
        <title>Cloning and functional expression of a 'fast' fungal kinesin.</title>
        <authorList>
            <person name="Grummt M."/>
            <person name="Pistor S."/>
            <person name="Lottspeich F."/>
            <person name="Schliwa M."/>
        </authorList>
    </citation>
    <scope>NUCLEOTIDE SEQUENCE [MRNA]</scope>
</reference>
<dbReference type="EMBL" id="AJ225894">
    <property type="protein sequence ID" value="CAA12647.1"/>
    <property type="molecule type" value="mRNA"/>
</dbReference>
<dbReference type="PIR" id="T51930">
    <property type="entry name" value="T51930"/>
</dbReference>
<dbReference type="SMR" id="O43093"/>
<dbReference type="GO" id="GO:0005737">
    <property type="term" value="C:cytoplasm"/>
    <property type="evidence" value="ECO:0007669"/>
    <property type="project" value="UniProtKB-KW"/>
</dbReference>
<dbReference type="GO" id="GO:0005874">
    <property type="term" value="C:microtubule"/>
    <property type="evidence" value="ECO:0007669"/>
    <property type="project" value="UniProtKB-KW"/>
</dbReference>
<dbReference type="GO" id="GO:0005875">
    <property type="term" value="C:microtubule associated complex"/>
    <property type="evidence" value="ECO:0007669"/>
    <property type="project" value="TreeGrafter"/>
</dbReference>
<dbReference type="GO" id="GO:0005524">
    <property type="term" value="F:ATP binding"/>
    <property type="evidence" value="ECO:0007669"/>
    <property type="project" value="UniProtKB-KW"/>
</dbReference>
<dbReference type="GO" id="GO:0008017">
    <property type="term" value="F:microtubule binding"/>
    <property type="evidence" value="ECO:0007669"/>
    <property type="project" value="InterPro"/>
</dbReference>
<dbReference type="GO" id="GO:0003777">
    <property type="term" value="F:microtubule motor activity"/>
    <property type="evidence" value="ECO:0007669"/>
    <property type="project" value="InterPro"/>
</dbReference>
<dbReference type="GO" id="GO:0007018">
    <property type="term" value="P:microtubule-based movement"/>
    <property type="evidence" value="ECO:0007669"/>
    <property type="project" value="InterPro"/>
</dbReference>
<dbReference type="GO" id="GO:0007052">
    <property type="term" value="P:mitotic spindle organization"/>
    <property type="evidence" value="ECO:0007669"/>
    <property type="project" value="TreeGrafter"/>
</dbReference>
<dbReference type="GO" id="GO:0051231">
    <property type="term" value="P:spindle elongation"/>
    <property type="evidence" value="ECO:0007669"/>
    <property type="project" value="TreeGrafter"/>
</dbReference>
<dbReference type="CDD" id="cd23649">
    <property type="entry name" value="Khc_CBD_cc"/>
    <property type="match status" value="1"/>
</dbReference>
<dbReference type="CDD" id="cd01369">
    <property type="entry name" value="KISc_KHC_KIF5"/>
    <property type="match status" value="1"/>
</dbReference>
<dbReference type="FunFam" id="3.40.850.10:FF:000031">
    <property type="entry name" value="Kinesin-like protein"/>
    <property type="match status" value="1"/>
</dbReference>
<dbReference type="Gene3D" id="3.40.850.10">
    <property type="entry name" value="Kinesin motor domain"/>
    <property type="match status" value="1"/>
</dbReference>
<dbReference type="InterPro" id="IPR027640">
    <property type="entry name" value="Kinesin-like_fam"/>
</dbReference>
<dbReference type="InterPro" id="IPR019821">
    <property type="entry name" value="Kinesin_motor_CS"/>
</dbReference>
<dbReference type="InterPro" id="IPR001752">
    <property type="entry name" value="Kinesin_motor_dom"/>
</dbReference>
<dbReference type="InterPro" id="IPR036961">
    <property type="entry name" value="Kinesin_motor_dom_sf"/>
</dbReference>
<dbReference type="InterPro" id="IPR027417">
    <property type="entry name" value="P-loop_NTPase"/>
</dbReference>
<dbReference type="PANTHER" id="PTHR47969">
    <property type="entry name" value="CHROMOSOME-ASSOCIATED KINESIN KIF4A-RELATED"/>
    <property type="match status" value="1"/>
</dbReference>
<dbReference type="PANTHER" id="PTHR47969:SF15">
    <property type="entry name" value="CHROMOSOME-ASSOCIATED KINESIN KIF4A-RELATED"/>
    <property type="match status" value="1"/>
</dbReference>
<dbReference type="Pfam" id="PF00225">
    <property type="entry name" value="Kinesin"/>
    <property type="match status" value="1"/>
</dbReference>
<dbReference type="PRINTS" id="PR00380">
    <property type="entry name" value="KINESINHEAVY"/>
</dbReference>
<dbReference type="SMART" id="SM00129">
    <property type="entry name" value="KISc"/>
    <property type="match status" value="1"/>
</dbReference>
<dbReference type="SUPFAM" id="SSF52540">
    <property type="entry name" value="P-loop containing nucleoside triphosphate hydrolases"/>
    <property type="match status" value="1"/>
</dbReference>
<dbReference type="PROSITE" id="PS00411">
    <property type="entry name" value="KINESIN_MOTOR_1"/>
    <property type="match status" value="1"/>
</dbReference>
<dbReference type="PROSITE" id="PS50067">
    <property type="entry name" value="KINESIN_MOTOR_2"/>
    <property type="match status" value="1"/>
</dbReference>
<protein>
    <recommendedName>
        <fullName>Kinesin heavy chain</fullName>
    </recommendedName>
    <alternativeName>
        <fullName>Synkin</fullName>
    </alternativeName>
</protein>
<organism>
    <name type="scientific">Syncephalastrum racemosum</name>
    <name type="common">Filamentous fungus</name>
    <dbReference type="NCBI Taxonomy" id="13706"/>
    <lineage>
        <taxon>Eukaryota</taxon>
        <taxon>Fungi</taxon>
        <taxon>Fungi incertae sedis</taxon>
        <taxon>Mucoromycota</taxon>
        <taxon>Mucoromycotina</taxon>
        <taxon>Mucoromycetes</taxon>
        <taxon>Mucorales</taxon>
        <taxon>Syncephalastraceae</taxon>
        <taxon>Syncephalastrum</taxon>
    </lineage>
</organism>